<accession>B3R7A2</accession>
<name>MURA_CUPTR</name>
<protein>
    <recommendedName>
        <fullName evidence="1">UDP-N-acetylglucosamine 1-carboxyvinyltransferase</fullName>
        <ecNumber evidence="1">2.5.1.7</ecNumber>
    </recommendedName>
    <alternativeName>
        <fullName evidence="1">Enoylpyruvate transferase</fullName>
    </alternativeName>
    <alternativeName>
        <fullName evidence="1">UDP-N-acetylglucosamine enolpyruvyl transferase</fullName>
        <shortName evidence="1">EPT</shortName>
    </alternativeName>
</protein>
<gene>
    <name evidence="1" type="primary">murA</name>
    <name type="ordered locus">RALTA_A2877</name>
</gene>
<reference key="1">
    <citation type="journal article" date="2008" name="Genome Res.">
        <title>Genome sequence of the beta-rhizobium Cupriavidus taiwanensis and comparative genomics of rhizobia.</title>
        <authorList>
            <person name="Amadou C."/>
            <person name="Pascal G."/>
            <person name="Mangenot S."/>
            <person name="Glew M."/>
            <person name="Bontemps C."/>
            <person name="Capela D."/>
            <person name="Carrere S."/>
            <person name="Cruveiller S."/>
            <person name="Dossat C."/>
            <person name="Lajus A."/>
            <person name="Marchetti M."/>
            <person name="Poinsot V."/>
            <person name="Rouy Z."/>
            <person name="Servin B."/>
            <person name="Saad M."/>
            <person name="Schenowitz C."/>
            <person name="Barbe V."/>
            <person name="Batut J."/>
            <person name="Medigue C."/>
            <person name="Masson-Boivin C."/>
        </authorList>
    </citation>
    <scope>NUCLEOTIDE SEQUENCE [LARGE SCALE GENOMIC DNA]</scope>
    <source>
        <strain>DSM 17343 / BCRC 17206 / CCUG 44338 / CIP 107171 / LMG 19424 / R1</strain>
    </source>
</reference>
<sequence>MDKFQIHGNGPLKGEIRVSGAKNAALPILCAGLLTADTVALDNVPNLQDVRTTLKLLRLMGMQAEFDGARVTLNGADVNVLEAPYELVKTMRASILVLGPLVARFGEARVSLPGGCGIGARPVDQHIKGLQAMGAEITIEHGFIHARAKRLKGARVVTDMITVTGTENLLMAATLAEGETVLENAAREPEVTDLAHLLVKMGAKIDGIGTDRLVVHGVERLHGASHSVIADRIEAGTFLCAAAATLGDLVLRGVQPDILDTVLDKLREAGARLETGDDWIRLAMPHRAKAVSFRTSEYPAFPTDMQAQFMALNAVAEGTARVTETIFENRFMHVQELNRLGADITVEGNTAVVNGVPRLSGANVMATDLRASASLVIAGLVADGETVIDRIYHLDRGYDRMEDKLSAVGAKIRRIA</sequence>
<proteinExistence type="inferred from homology"/>
<feature type="chain" id="PRO_1000094685" description="UDP-N-acetylglucosamine 1-carboxyvinyltransferase">
    <location>
        <begin position="1"/>
        <end position="416"/>
    </location>
</feature>
<feature type="active site" description="Proton donor" evidence="1">
    <location>
        <position position="116"/>
    </location>
</feature>
<feature type="binding site" evidence="1">
    <location>
        <begin position="22"/>
        <end position="23"/>
    </location>
    <ligand>
        <name>phosphoenolpyruvate</name>
        <dbReference type="ChEBI" id="CHEBI:58702"/>
    </ligand>
</feature>
<feature type="binding site" evidence="1">
    <location>
        <position position="92"/>
    </location>
    <ligand>
        <name>UDP-N-acetyl-alpha-D-glucosamine</name>
        <dbReference type="ChEBI" id="CHEBI:57705"/>
    </ligand>
</feature>
<feature type="binding site" evidence="1">
    <location>
        <begin position="121"/>
        <end position="125"/>
    </location>
    <ligand>
        <name>UDP-N-acetyl-alpha-D-glucosamine</name>
        <dbReference type="ChEBI" id="CHEBI:57705"/>
    </ligand>
</feature>
<feature type="binding site" evidence="1">
    <location>
        <position position="304"/>
    </location>
    <ligand>
        <name>UDP-N-acetyl-alpha-D-glucosamine</name>
        <dbReference type="ChEBI" id="CHEBI:57705"/>
    </ligand>
</feature>
<feature type="binding site" evidence="1">
    <location>
        <position position="326"/>
    </location>
    <ligand>
        <name>UDP-N-acetyl-alpha-D-glucosamine</name>
        <dbReference type="ChEBI" id="CHEBI:57705"/>
    </ligand>
</feature>
<feature type="modified residue" description="2-(S-cysteinyl)pyruvic acid O-phosphothioketal" evidence="1">
    <location>
        <position position="116"/>
    </location>
</feature>
<keyword id="KW-0131">Cell cycle</keyword>
<keyword id="KW-0132">Cell division</keyword>
<keyword id="KW-0133">Cell shape</keyword>
<keyword id="KW-0961">Cell wall biogenesis/degradation</keyword>
<keyword id="KW-0963">Cytoplasm</keyword>
<keyword id="KW-0573">Peptidoglycan synthesis</keyword>
<keyword id="KW-0670">Pyruvate</keyword>
<keyword id="KW-0808">Transferase</keyword>
<dbReference type="EC" id="2.5.1.7" evidence="1"/>
<dbReference type="EMBL" id="CU633749">
    <property type="protein sequence ID" value="CAQ70802.1"/>
    <property type="molecule type" value="Genomic_DNA"/>
</dbReference>
<dbReference type="RefSeq" id="WP_012354093.1">
    <property type="nucleotide sequence ID" value="NC_010528.1"/>
</dbReference>
<dbReference type="SMR" id="B3R7A2"/>
<dbReference type="GeneID" id="29762171"/>
<dbReference type="KEGG" id="cti:RALTA_A2877"/>
<dbReference type="eggNOG" id="COG0766">
    <property type="taxonomic scope" value="Bacteria"/>
</dbReference>
<dbReference type="HOGENOM" id="CLU_027387_0_0_4"/>
<dbReference type="BioCyc" id="CTAI977880:RALTA_RS14020-MONOMER"/>
<dbReference type="UniPathway" id="UPA00219"/>
<dbReference type="Proteomes" id="UP000001692">
    <property type="component" value="Chromosome 1"/>
</dbReference>
<dbReference type="GO" id="GO:0005737">
    <property type="term" value="C:cytoplasm"/>
    <property type="evidence" value="ECO:0007669"/>
    <property type="project" value="UniProtKB-SubCell"/>
</dbReference>
<dbReference type="GO" id="GO:0008760">
    <property type="term" value="F:UDP-N-acetylglucosamine 1-carboxyvinyltransferase activity"/>
    <property type="evidence" value="ECO:0007669"/>
    <property type="project" value="UniProtKB-UniRule"/>
</dbReference>
<dbReference type="GO" id="GO:0051301">
    <property type="term" value="P:cell division"/>
    <property type="evidence" value="ECO:0007669"/>
    <property type="project" value="UniProtKB-KW"/>
</dbReference>
<dbReference type="GO" id="GO:0071555">
    <property type="term" value="P:cell wall organization"/>
    <property type="evidence" value="ECO:0007669"/>
    <property type="project" value="UniProtKB-KW"/>
</dbReference>
<dbReference type="GO" id="GO:0009252">
    <property type="term" value="P:peptidoglycan biosynthetic process"/>
    <property type="evidence" value="ECO:0007669"/>
    <property type="project" value="UniProtKB-UniRule"/>
</dbReference>
<dbReference type="GO" id="GO:0008360">
    <property type="term" value="P:regulation of cell shape"/>
    <property type="evidence" value="ECO:0007669"/>
    <property type="project" value="UniProtKB-KW"/>
</dbReference>
<dbReference type="GO" id="GO:0019277">
    <property type="term" value="P:UDP-N-acetylgalactosamine biosynthetic process"/>
    <property type="evidence" value="ECO:0007669"/>
    <property type="project" value="InterPro"/>
</dbReference>
<dbReference type="CDD" id="cd01555">
    <property type="entry name" value="UdpNAET"/>
    <property type="match status" value="1"/>
</dbReference>
<dbReference type="FunFam" id="3.65.10.10:FF:000002">
    <property type="entry name" value="UDP-N-acetylglucosamine 1-carboxyvinyltransferase"/>
    <property type="match status" value="1"/>
</dbReference>
<dbReference type="Gene3D" id="3.65.10.10">
    <property type="entry name" value="Enolpyruvate transferase domain"/>
    <property type="match status" value="2"/>
</dbReference>
<dbReference type="HAMAP" id="MF_00111">
    <property type="entry name" value="MurA"/>
    <property type="match status" value="1"/>
</dbReference>
<dbReference type="InterPro" id="IPR001986">
    <property type="entry name" value="Enolpyruvate_Tfrase_dom"/>
</dbReference>
<dbReference type="InterPro" id="IPR036968">
    <property type="entry name" value="Enolpyruvate_Tfrase_sf"/>
</dbReference>
<dbReference type="InterPro" id="IPR050068">
    <property type="entry name" value="MurA_subfamily"/>
</dbReference>
<dbReference type="InterPro" id="IPR013792">
    <property type="entry name" value="RNA3'P_cycl/enolpyr_Trfase_a/b"/>
</dbReference>
<dbReference type="InterPro" id="IPR005750">
    <property type="entry name" value="UDP_GlcNAc_COvinyl_MurA"/>
</dbReference>
<dbReference type="NCBIfam" id="TIGR01072">
    <property type="entry name" value="murA"/>
    <property type="match status" value="1"/>
</dbReference>
<dbReference type="NCBIfam" id="NF006873">
    <property type="entry name" value="PRK09369.1"/>
    <property type="match status" value="1"/>
</dbReference>
<dbReference type="PANTHER" id="PTHR43783">
    <property type="entry name" value="UDP-N-ACETYLGLUCOSAMINE 1-CARBOXYVINYLTRANSFERASE"/>
    <property type="match status" value="1"/>
</dbReference>
<dbReference type="PANTHER" id="PTHR43783:SF1">
    <property type="entry name" value="UDP-N-ACETYLGLUCOSAMINE 1-CARBOXYVINYLTRANSFERASE"/>
    <property type="match status" value="1"/>
</dbReference>
<dbReference type="Pfam" id="PF00275">
    <property type="entry name" value="EPSP_synthase"/>
    <property type="match status" value="1"/>
</dbReference>
<dbReference type="SUPFAM" id="SSF55205">
    <property type="entry name" value="EPT/RTPC-like"/>
    <property type="match status" value="1"/>
</dbReference>
<comment type="function">
    <text evidence="1">Cell wall formation. Adds enolpyruvyl to UDP-N-acetylglucosamine.</text>
</comment>
<comment type="catalytic activity">
    <reaction evidence="1">
        <text>phosphoenolpyruvate + UDP-N-acetyl-alpha-D-glucosamine = UDP-N-acetyl-3-O-(1-carboxyvinyl)-alpha-D-glucosamine + phosphate</text>
        <dbReference type="Rhea" id="RHEA:18681"/>
        <dbReference type="ChEBI" id="CHEBI:43474"/>
        <dbReference type="ChEBI" id="CHEBI:57705"/>
        <dbReference type="ChEBI" id="CHEBI:58702"/>
        <dbReference type="ChEBI" id="CHEBI:68483"/>
        <dbReference type="EC" id="2.5.1.7"/>
    </reaction>
</comment>
<comment type="pathway">
    <text evidence="1">Cell wall biogenesis; peptidoglycan biosynthesis.</text>
</comment>
<comment type="subcellular location">
    <subcellularLocation>
        <location evidence="1">Cytoplasm</location>
    </subcellularLocation>
</comment>
<comment type="similarity">
    <text evidence="1">Belongs to the EPSP synthase family. MurA subfamily.</text>
</comment>
<evidence type="ECO:0000255" key="1">
    <source>
        <dbReference type="HAMAP-Rule" id="MF_00111"/>
    </source>
</evidence>
<organism>
    <name type="scientific">Cupriavidus taiwanensis (strain DSM 17343 / BCRC 17206 / CCUG 44338 / CIP 107171 / LMG 19424 / R1)</name>
    <name type="common">Ralstonia taiwanensis (strain LMG 19424)</name>
    <dbReference type="NCBI Taxonomy" id="977880"/>
    <lineage>
        <taxon>Bacteria</taxon>
        <taxon>Pseudomonadati</taxon>
        <taxon>Pseudomonadota</taxon>
        <taxon>Betaproteobacteria</taxon>
        <taxon>Burkholderiales</taxon>
        <taxon>Burkholderiaceae</taxon>
        <taxon>Cupriavidus</taxon>
    </lineage>
</organism>